<gene>
    <name evidence="1" type="primary">thiM</name>
    <name type="ordered locus">CE1592</name>
</gene>
<reference key="1">
    <citation type="journal article" date="2003" name="Genome Res.">
        <title>Comparative complete genome sequence analysis of the amino acid replacements responsible for the thermostability of Corynebacterium efficiens.</title>
        <authorList>
            <person name="Nishio Y."/>
            <person name="Nakamura Y."/>
            <person name="Kawarabayasi Y."/>
            <person name="Usuda Y."/>
            <person name="Kimura E."/>
            <person name="Sugimoto S."/>
            <person name="Matsui K."/>
            <person name="Yamagishi A."/>
            <person name="Kikuchi H."/>
            <person name="Ikeo K."/>
            <person name="Gojobori T."/>
        </authorList>
    </citation>
    <scope>NUCLEOTIDE SEQUENCE [LARGE SCALE GENOMIC DNA]</scope>
    <source>
        <strain>DSM 44549 / YS-314 / AJ 12310 / JCM 11189 / NBRC 100395</strain>
    </source>
</reference>
<name>THIM_COREF</name>
<accession>Q8FTH7</accession>
<keyword id="KW-0067">ATP-binding</keyword>
<keyword id="KW-0418">Kinase</keyword>
<keyword id="KW-0460">Magnesium</keyword>
<keyword id="KW-0479">Metal-binding</keyword>
<keyword id="KW-0547">Nucleotide-binding</keyword>
<keyword id="KW-1185">Reference proteome</keyword>
<keyword id="KW-0784">Thiamine biosynthesis</keyword>
<keyword id="KW-0808">Transferase</keyword>
<protein>
    <recommendedName>
        <fullName evidence="1">Hydroxyethylthiazole kinase</fullName>
        <ecNumber evidence="1">2.7.1.50</ecNumber>
    </recommendedName>
    <alternativeName>
        <fullName evidence="1">4-methyl-5-beta-hydroxyethylthiazole kinase</fullName>
        <shortName evidence="1">TH kinase</shortName>
        <shortName evidence="1">Thz kinase</shortName>
    </alternativeName>
</protein>
<evidence type="ECO:0000255" key="1">
    <source>
        <dbReference type="HAMAP-Rule" id="MF_00228"/>
    </source>
</evidence>
<comment type="function">
    <text evidence="1">Catalyzes the phosphorylation of the hydroxyl group of 4-methyl-5-beta-hydroxyethylthiazole (THZ).</text>
</comment>
<comment type="catalytic activity">
    <reaction evidence="1">
        <text>5-(2-hydroxyethyl)-4-methylthiazole + ATP = 4-methyl-5-(2-phosphooxyethyl)-thiazole + ADP + H(+)</text>
        <dbReference type="Rhea" id="RHEA:24212"/>
        <dbReference type="ChEBI" id="CHEBI:15378"/>
        <dbReference type="ChEBI" id="CHEBI:17957"/>
        <dbReference type="ChEBI" id="CHEBI:30616"/>
        <dbReference type="ChEBI" id="CHEBI:58296"/>
        <dbReference type="ChEBI" id="CHEBI:456216"/>
        <dbReference type="EC" id="2.7.1.50"/>
    </reaction>
</comment>
<comment type="cofactor">
    <cofactor evidence="1">
        <name>Mg(2+)</name>
        <dbReference type="ChEBI" id="CHEBI:18420"/>
    </cofactor>
</comment>
<comment type="pathway">
    <text evidence="1">Cofactor biosynthesis; thiamine diphosphate biosynthesis; 4-methyl-5-(2-phosphoethyl)-thiazole from 5-(2-hydroxyethyl)-4-methylthiazole: step 1/1.</text>
</comment>
<comment type="similarity">
    <text evidence="1">Belongs to the Thz kinase family.</text>
</comment>
<organism>
    <name type="scientific">Corynebacterium efficiens (strain DSM 44549 / YS-314 / AJ 12310 / JCM 11189 / NBRC 100395)</name>
    <dbReference type="NCBI Taxonomy" id="196164"/>
    <lineage>
        <taxon>Bacteria</taxon>
        <taxon>Bacillati</taxon>
        <taxon>Actinomycetota</taxon>
        <taxon>Actinomycetes</taxon>
        <taxon>Mycobacteriales</taxon>
        <taxon>Corynebacteriaceae</taxon>
        <taxon>Corynebacterium</taxon>
    </lineage>
</organism>
<proteinExistence type="inferred from homology"/>
<dbReference type="EC" id="2.7.1.50" evidence="1"/>
<dbReference type="EMBL" id="BA000035">
    <property type="protein sequence ID" value="BAC18402.1"/>
    <property type="molecule type" value="Genomic_DNA"/>
</dbReference>
<dbReference type="RefSeq" id="WP_011075524.1">
    <property type="nucleotide sequence ID" value="NC_004369.1"/>
</dbReference>
<dbReference type="SMR" id="Q8FTH7"/>
<dbReference type="STRING" id="196164.gene:10742011"/>
<dbReference type="KEGG" id="cef:CE1592"/>
<dbReference type="eggNOG" id="COG2145">
    <property type="taxonomic scope" value="Bacteria"/>
</dbReference>
<dbReference type="HOGENOM" id="CLU_019943_0_1_11"/>
<dbReference type="UniPathway" id="UPA00060">
    <property type="reaction ID" value="UER00139"/>
</dbReference>
<dbReference type="Proteomes" id="UP000001409">
    <property type="component" value="Chromosome"/>
</dbReference>
<dbReference type="GO" id="GO:0005524">
    <property type="term" value="F:ATP binding"/>
    <property type="evidence" value="ECO:0007669"/>
    <property type="project" value="UniProtKB-UniRule"/>
</dbReference>
<dbReference type="GO" id="GO:0004417">
    <property type="term" value="F:hydroxyethylthiazole kinase activity"/>
    <property type="evidence" value="ECO:0007669"/>
    <property type="project" value="UniProtKB-UniRule"/>
</dbReference>
<dbReference type="GO" id="GO:0000287">
    <property type="term" value="F:magnesium ion binding"/>
    <property type="evidence" value="ECO:0007669"/>
    <property type="project" value="UniProtKB-UniRule"/>
</dbReference>
<dbReference type="GO" id="GO:0009228">
    <property type="term" value="P:thiamine biosynthetic process"/>
    <property type="evidence" value="ECO:0007669"/>
    <property type="project" value="UniProtKB-KW"/>
</dbReference>
<dbReference type="GO" id="GO:0009229">
    <property type="term" value="P:thiamine diphosphate biosynthetic process"/>
    <property type="evidence" value="ECO:0007669"/>
    <property type="project" value="UniProtKB-UniRule"/>
</dbReference>
<dbReference type="CDD" id="cd01170">
    <property type="entry name" value="THZ_kinase"/>
    <property type="match status" value="1"/>
</dbReference>
<dbReference type="Gene3D" id="3.40.1190.20">
    <property type="match status" value="1"/>
</dbReference>
<dbReference type="HAMAP" id="MF_00228">
    <property type="entry name" value="Thz_kinase"/>
    <property type="match status" value="1"/>
</dbReference>
<dbReference type="InterPro" id="IPR000417">
    <property type="entry name" value="Hyethyz_kinase"/>
</dbReference>
<dbReference type="InterPro" id="IPR029056">
    <property type="entry name" value="Ribokinase-like"/>
</dbReference>
<dbReference type="NCBIfam" id="NF006830">
    <property type="entry name" value="PRK09355.1"/>
    <property type="match status" value="1"/>
</dbReference>
<dbReference type="Pfam" id="PF02110">
    <property type="entry name" value="HK"/>
    <property type="match status" value="1"/>
</dbReference>
<dbReference type="PIRSF" id="PIRSF000513">
    <property type="entry name" value="Thz_kinase"/>
    <property type="match status" value="1"/>
</dbReference>
<dbReference type="PRINTS" id="PR01099">
    <property type="entry name" value="HYETHTZKNASE"/>
</dbReference>
<dbReference type="SUPFAM" id="SSF53613">
    <property type="entry name" value="Ribokinase-like"/>
    <property type="match status" value="1"/>
</dbReference>
<feature type="chain" id="PRO_0000156931" description="Hydroxyethylthiazole kinase">
    <location>
        <begin position="1"/>
        <end position="270"/>
    </location>
</feature>
<feature type="binding site" evidence="1">
    <location>
        <position position="44"/>
    </location>
    <ligand>
        <name>substrate</name>
    </ligand>
</feature>
<feature type="binding site" evidence="1">
    <location>
        <position position="119"/>
    </location>
    <ligand>
        <name>ATP</name>
        <dbReference type="ChEBI" id="CHEBI:30616"/>
    </ligand>
</feature>
<feature type="binding site" evidence="1">
    <location>
        <position position="165"/>
    </location>
    <ligand>
        <name>ATP</name>
        <dbReference type="ChEBI" id="CHEBI:30616"/>
    </ligand>
</feature>
<feature type="binding site" evidence="1">
    <location>
        <position position="192"/>
    </location>
    <ligand>
        <name>substrate</name>
    </ligand>
</feature>
<sequence>MADSYLHAPTLVRATTPLVQCLTNAVVMQFTANALLAIGASPAMVDTPAESFDFAGVADGVLINAGTPSAEQYAGMERAIEGATAAGTPWVLDPVGVGGLAERSAFLRRAVDKHPAAIRGNASEIVALAGLGAGGRGVDATDDVADAVEAAQVLARRTGGVVAVTGAEDLIVSRGRVSWLKSGDPMLQLVIGTGCALGAVTAAYLGATQDTDIDPHDAVVAAHAHLGAAGRIAATRATAPGSYAVALIDALHQLDRNQLANLTHLREENR</sequence>